<accession>A1AK41</accession>
<sequence length="382" mass="41019">MKRHLNMLREFSIPLISGVIVALVWANISPESYQHFDHDRNFGPFSFHFIVNDFFMVLFFGIAAAEITQSCLPGGDLYPLRKAVNPLLATIGGVVGPVLVYVVLNALMGDPSLLRGWGIPTATDIALAWLVASLVFGKRHPAISFLLLLAIADDAIGLAIIALFYPDPNLPAAPQWLVLVLSGMGAAALLRRGNAQSYWPYIILGGGLSWAGLFMAHLHPALALVFIVPFLPHPHREKKHLFEEDMRDLSPLASFEHEWKVMVDFGLFLFGLANAGVTFGSIGAATWLVLASLVIGKTGGIFFMGWLGRRLGYPLPSRVGGKELALVGLIAGIGLTVALFVAGEAFTDPARQGAAKMGALMSAGCAVLALAAGRIMNVKRIT</sequence>
<protein>
    <recommendedName>
        <fullName evidence="1">Na(+)/H(+) antiporter NhaA 1</fullName>
    </recommendedName>
    <alternativeName>
        <fullName evidence="1">Sodium/proton antiporter NhaA 1</fullName>
    </alternativeName>
</protein>
<proteinExistence type="inferred from homology"/>
<comment type="function">
    <text evidence="1">Na(+)/H(+) antiporter that extrudes sodium in exchange for external protons.</text>
</comment>
<comment type="catalytic activity">
    <reaction evidence="1">
        <text>Na(+)(in) + 2 H(+)(out) = Na(+)(out) + 2 H(+)(in)</text>
        <dbReference type="Rhea" id="RHEA:29251"/>
        <dbReference type="ChEBI" id="CHEBI:15378"/>
        <dbReference type="ChEBI" id="CHEBI:29101"/>
    </reaction>
    <physiologicalReaction direction="left-to-right" evidence="1">
        <dbReference type="Rhea" id="RHEA:29252"/>
    </physiologicalReaction>
</comment>
<comment type="subcellular location">
    <subcellularLocation>
        <location evidence="1">Cell inner membrane</location>
        <topology evidence="1">Multi-pass membrane protein</topology>
    </subcellularLocation>
</comment>
<comment type="similarity">
    <text evidence="1">Belongs to the NhaA Na(+)/H(+) (TC 2.A.33) antiporter family.</text>
</comment>
<keyword id="KW-0050">Antiport</keyword>
<keyword id="KW-0997">Cell inner membrane</keyword>
<keyword id="KW-1003">Cell membrane</keyword>
<keyword id="KW-0406">Ion transport</keyword>
<keyword id="KW-0472">Membrane</keyword>
<keyword id="KW-1185">Reference proteome</keyword>
<keyword id="KW-0915">Sodium</keyword>
<keyword id="KW-0739">Sodium transport</keyword>
<keyword id="KW-0812">Transmembrane</keyword>
<keyword id="KW-1133">Transmembrane helix</keyword>
<keyword id="KW-0813">Transport</keyword>
<dbReference type="EMBL" id="CP000482">
    <property type="protein sequence ID" value="ABK97711.1"/>
    <property type="molecule type" value="Genomic_DNA"/>
</dbReference>
<dbReference type="SMR" id="A1AK41"/>
<dbReference type="STRING" id="338966.Ppro_0071"/>
<dbReference type="TCDB" id="2.A.33.1.4">
    <property type="family name" value="the nhaa na(+):h(+) antiporter (nhaa) family"/>
</dbReference>
<dbReference type="KEGG" id="ppd:Ppro_0071"/>
<dbReference type="eggNOG" id="COG3004">
    <property type="taxonomic scope" value="Bacteria"/>
</dbReference>
<dbReference type="HOGENOM" id="CLU_015803_1_2_7"/>
<dbReference type="OrthoDB" id="9808135at2"/>
<dbReference type="Proteomes" id="UP000006732">
    <property type="component" value="Chromosome"/>
</dbReference>
<dbReference type="GO" id="GO:0005886">
    <property type="term" value="C:plasma membrane"/>
    <property type="evidence" value="ECO:0007669"/>
    <property type="project" value="UniProtKB-SubCell"/>
</dbReference>
<dbReference type="GO" id="GO:0015385">
    <property type="term" value="F:sodium:proton antiporter activity"/>
    <property type="evidence" value="ECO:0007669"/>
    <property type="project" value="TreeGrafter"/>
</dbReference>
<dbReference type="GO" id="GO:0006885">
    <property type="term" value="P:regulation of pH"/>
    <property type="evidence" value="ECO:0007669"/>
    <property type="project" value="InterPro"/>
</dbReference>
<dbReference type="Gene3D" id="1.20.1530.10">
    <property type="entry name" value="Na+/H+ antiporter like domain"/>
    <property type="match status" value="1"/>
</dbReference>
<dbReference type="HAMAP" id="MF_01844">
    <property type="entry name" value="NhaA"/>
    <property type="match status" value="1"/>
</dbReference>
<dbReference type="InterPro" id="IPR023171">
    <property type="entry name" value="Na/H_antiporter_dom_sf"/>
</dbReference>
<dbReference type="InterPro" id="IPR004670">
    <property type="entry name" value="NhaA"/>
</dbReference>
<dbReference type="PANTHER" id="PTHR30341:SF0">
    <property type="entry name" value="NA(+)_H(+) ANTIPORTER NHAA"/>
    <property type="match status" value="1"/>
</dbReference>
<dbReference type="PANTHER" id="PTHR30341">
    <property type="entry name" value="SODIUM ION/PROTON ANTIPORTER NHAA-RELATED"/>
    <property type="match status" value="1"/>
</dbReference>
<dbReference type="Pfam" id="PF06965">
    <property type="entry name" value="Na_H_antiport_1"/>
    <property type="match status" value="1"/>
</dbReference>
<feature type="chain" id="PRO_0000334359" description="Na(+)/H(+) antiporter NhaA 1">
    <location>
        <begin position="1"/>
        <end position="382"/>
    </location>
</feature>
<feature type="transmembrane region" description="Helical" evidence="1">
    <location>
        <begin position="10"/>
        <end position="30"/>
    </location>
</feature>
<feature type="transmembrane region" description="Helical" evidence="1">
    <location>
        <begin position="45"/>
        <end position="65"/>
    </location>
</feature>
<feature type="transmembrane region" description="Helical" evidence="1">
    <location>
        <begin position="87"/>
        <end position="107"/>
    </location>
</feature>
<feature type="transmembrane region" description="Helical" evidence="1">
    <location>
        <begin position="116"/>
        <end position="136"/>
    </location>
</feature>
<feature type="transmembrane region" description="Helical" evidence="1">
    <location>
        <begin position="145"/>
        <end position="165"/>
    </location>
</feature>
<feature type="transmembrane region" description="Helical" evidence="1">
    <location>
        <begin position="170"/>
        <end position="190"/>
    </location>
</feature>
<feature type="transmembrane region" description="Helical" evidence="1">
    <location>
        <begin position="211"/>
        <end position="231"/>
    </location>
</feature>
<feature type="transmembrane region" description="Helical" evidence="1">
    <location>
        <begin position="252"/>
        <end position="272"/>
    </location>
</feature>
<feature type="transmembrane region" description="Helical" evidence="1">
    <location>
        <begin position="275"/>
        <end position="295"/>
    </location>
</feature>
<feature type="transmembrane region" description="Helical" evidence="1">
    <location>
        <begin position="326"/>
        <end position="346"/>
    </location>
</feature>
<feature type="transmembrane region" description="Helical" evidence="1">
    <location>
        <begin position="353"/>
        <end position="373"/>
    </location>
</feature>
<reference key="1">
    <citation type="submission" date="2006-10" db="EMBL/GenBank/DDBJ databases">
        <title>Complete sequence of chromosome of Pelobacter propionicus DSM 2379.</title>
        <authorList>
            <consortium name="US DOE Joint Genome Institute"/>
            <person name="Copeland A."/>
            <person name="Lucas S."/>
            <person name="Lapidus A."/>
            <person name="Barry K."/>
            <person name="Detter J.C."/>
            <person name="Glavina del Rio T."/>
            <person name="Hammon N."/>
            <person name="Israni S."/>
            <person name="Dalin E."/>
            <person name="Tice H."/>
            <person name="Pitluck S."/>
            <person name="Saunders E."/>
            <person name="Brettin T."/>
            <person name="Bruce D."/>
            <person name="Han C."/>
            <person name="Tapia R."/>
            <person name="Schmutz J."/>
            <person name="Larimer F."/>
            <person name="Land M."/>
            <person name="Hauser L."/>
            <person name="Kyrpides N."/>
            <person name="Kim E."/>
            <person name="Lovley D."/>
            <person name="Richardson P."/>
        </authorList>
    </citation>
    <scope>NUCLEOTIDE SEQUENCE [LARGE SCALE GENOMIC DNA]</scope>
    <source>
        <strain>DSM 2379 / NBRC 103807 / OttBd1</strain>
    </source>
</reference>
<evidence type="ECO:0000255" key="1">
    <source>
        <dbReference type="HAMAP-Rule" id="MF_01844"/>
    </source>
</evidence>
<gene>
    <name evidence="1" type="primary">nhaA1</name>
    <name type="ordered locus">Ppro_0071</name>
</gene>
<organism>
    <name type="scientific">Pelobacter propionicus (strain DSM 2379 / NBRC 103807 / OttBd1)</name>
    <dbReference type="NCBI Taxonomy" id="338966"/>
    <lineage>
        <taxon>Bacteria</taxon>
        <taxon>Pseudomonadati</taxon>
        <taxon>Thermodesulfobacteriota</taxon>
        <taxon>Desulfuromonadia</taxon>
        <taxon>Desulfuromonadales</taxon>
        <taxon>Desulfuromonadaceae</taxon>
        <taxon>Pelobacter</taxon>
    </lineage>
</organism>
<name>NHAA1_PELPD</name>